<name>CYAE_BORPE</name>
<accession>P0DKY0</accession>
<accession>P11092</accession>
<proteinExistence type="inferred from homology"/>
<protein>
    <recommendedName>
        <fullName>Protein CyaE</fullName>
    </recommendedName>
</protein>
<reference key="1">
    <citation type="journal article" date="2003" name="Nat. Genet.">
        <title>Comparative analysis of the genome sequences of Bordetella pertussis, Bordetella parapertussis and Bordetella bronchiseptica.</title>
        <authorList>
            <person name="Parkhill J."/>
            <person name="Sebaihia M."/>
            <person name="Preston A."/>
            <person name="Murphy L.D."/>
            <person name="Thomson N.R."/>
            <person name="Harris D.E."/>
            <person name="Holden M.T.G."/>
            <person name="Churcher C.M."/>
            <person name="Bentley S.D."/>
            <person name="Mungall K.L."/>
            <person name="Cerdeno-Tarraga A.-M."/>
            <person name="Temple L."/>
            <person name="James K.D."/>
            <person name="Harris B."/>
            <person name="Quail M.A."/>
            <person name="Achtman M."/>
            <person name="Atkin R."/>
            <person name="Baker S."/>
            <person name="Basham D."/>
            <person name="Bason N."/>
            <person name="Cherevach I."/>
            <person name="Chillingworth T."/>
            <person name="Collins M."/>
            <person name="Cronin A."/>
            <person name="Davis P."/>
            <person name="Doggett J."/>
            <person name="Feltwell T."/>
            <person name="Goble A."/>
            <person name="Hamlin N."/>
            <person name="Hauser H."/>
            <person name="Holroyd S."/>
            <person name="Jagels K."/>
            <person name="Leather S."/>
            <person name="Moule S."/>
            <person name="Norberczak H."/>
            <person name="O'Neil S."/>
            <person name="Ormond D."/>
            <person name="Price C."/>
            <person name="Rabbinowitsch E."/>
            <person name="Rutter S."/>
            <person name="Sanders M."/>
            <person name="Saunders D."/>
            <person name="Seeger K."/>
            <person name="Sharp S."/>
            <person name="Simmonds M."/>
            <person name="Skelton J."/>
            <person name="Squares R."/>
            <person name="Squares S."/>
            <person name="Stevens K."/>
            <person name="Unwin L."/>
            <person name="Whitehead S."/>
            <person name="Barrell B.G."/>
            <person name="Maskell D.J."/>
        </authorList>
    </citation>
    <scope>NUCLEOTIDE SEQUENCE [LARGE SCALE GENOMIC DNA]</scope>
    <source>
        <strain>Tohama I / ATCC BAA-589 / NCTC 13251</strain>
    </source>
</reference>
<sequence length="474" mass="50205">MAAVQVRRRGRALALALWAGFALSVGGGVRARDGLATPPAFEGQAAPAVSWPCPPPADRLDDLALLEAIDLALCHSPALRQGWARIKARSAEVGLARAPYYPSVALSAGRSAQRRSTGLGEDGVRNNVMAVTLAWRLFDSGARSAALRAAQAQLDEAAQAYGAVLQDKLAEVVGAYYEAATARQALHTAVEDTEIARRSASIAARRARAGLDSHGDVLHAQAALERARLAQAQAEGAQARALAGLAQVLGVDPATPIVLAPGPLAPQRIEDRELAQWLRDARQRHPAIKAAQAGLAAATAQVDVARATDMPTVDLSLGHYRNSSENVSVFAGSSRSVSASLNLRIPLFDGFARRHRIQGARAEVQRQEALLDQARLATGAAVARAYADLRAARASHEASLRWLKAARAAYESDLRRYEAGVGGVAELLRAQSDWLSARQRHVLYAAQLRTRALALLAAAGELGRSTIDGDPPKE</sequence>
<evidence type="ECO:0000250" key="1"/>
<evidence type="ECO:0000255" key="2"/>
<evidence type="ECO:0000305" key="3"/>
<keyword id="KW-0998">Cell outer membrane</keyword>
<keyword id="KW-0204">Cytolysis</keyword>
<keyword id="KW-0354">Hemolysis</keyword>
<keyword id="KW-0472">Membrane</keyword>
<keyword id="KW-1185">Reference proteome</keyword>
<keyword id="KW-0732">Signal</keyword>
<keyword id="KW-0812">Transmembrane</keyword>
<keyword id="KW-1134">Transmembrane beta strand</keyword>
<keyword id="KW-0813">Transport</keyword>
<feature type="signal peptide" evidence="2">
    <location>
        <begin position="1"/>
        <end position="31"/>
    </location>
</feature>
<feature type="chain" id="PRO_0000013350" description="Protein CyaE">
    <location>
        <begin position="32"/>
        <end position="474"/>
    </location>
</feature>
<comment type="function">
    <text evidence="1">CyaE is necessary for transport of calmodulin-sensitive adenylate cyclase-hemolysin (cyclolysin).</text>
</comment>
<comment type="subcellular location">
    <subcellularLocation>
        <location evidence="1">Cell outer membrane</location>
        <topology evidence="1">Peripheral membrane protein</topology>
    </subcellularLocation>
</comment>
<comment type="similarity">
    <text evidence="3">Belongs to the outer membrane factor (OMF) (TC 1.B.17) family.</text>
</comment>
<organism>
    <name type="scientific">Bordetella pertussis (strain Tohama I / ATCC BAA-589 / NCTC 13251)</name>
    <dbReference type="NCBI Taxonomy" id="257313"/>
    <lineage>
        <taxon>Bacteria</taxon>
        <taxon>Pseudomonadati</taxon>
        <taxon>Pseudomonadota</taxon>
        <taxon>Betaproteobacteria</taxon>
        <taxon>Burkholderiales</taxon>
        <taxon>Alcaligenaceae</taxon>
        <taxon>Bordetella</taxon>
    </lineage>
</organism>
<dbReference type="EMBL" id="BX640413">
    <property type="protein sequence ID" value="CAE41069.1"/>
    <property type="molecule type" value="Genomic_DNA"/>
</dbReference>
<dbReference type="RefSeq" id="NP_879581.1">
    <property type="nucleotide sequence ID" value="NC_002929.2"/>
</dbReference>
<dbReference type="RefSeq" id="WP_010929998.1">
    <property type="nucleotide sequence ID" value="NZ_CP039022.1"/>
</dbReference>
<dbReference type="SMR" id="P0DKY0"/>
<dbReference type="STRING" id="257313.BP0763"/>
<dbReference type="PaxDb" id="257313-BP0763"/>
<dbReference type="GeneID" id="69600715"/>
<dbReference type="KEGG" id="bpe:BP0763"/>
<dbReference type="PATRIC" id="fig|257313.5.peg.816"/>
<dbReference type="eggNOG" id="COG1538">
    <property type="taxonomic scope" value="Bacteria"/>
</dbReference>
<dbReference type="HOGENOM" id="CLU_012817_10_2_4"/>
<dbReference type="Proteomes" id="UP000002676">
    <property type="component" value="Chromosome"/>
</dbReference>
<dbReference type="GO" id="GO:0009279">
    <property type="term" value="C:cell outer membrane"/>
    <property type="evidence" value="ECO:0007669"/>
    <property type="project" value="UniProtKB-SubCell"/>
</dbReference>
<dbReference type="GO" id="GO:1990281">
    <property type="term" value="C:efflux pump complex"/>
    <property type="evidence" value="ECO:0007669"/>
    <property type="project" value="TreeGrafter"/>
</dbReference>
<dbReference type="GO" id="GO:0015562">
    <property type="term" value="F:efflux transmembrane transporter activity"/>
    <property type="evidence" value="ECO:0007669"/>
    <property type="project" value="InterPro"/>
</dbReference>
<dbReference type="GO" id="GO:0015288">
    <property type="term" value="F:porin activity"/>
    <property type="evidence" value="ECO:0007669"/>
    <property type="project" value="TreeGrafter"/>
</dbReference>
<dbReference type="GO" id="GO:0031640">
    <property type="term" value="P:killing of cells of another organism"/>
    <property type="evidence" value="ECO:0007669"/>
    <property type="project" value="UniProtKB-KW"/>
</dbReference>
<dbReference type="Gene3D" id="1.20.1600.10">
    <property type="entry name" value="Outer membrane efflux proteins (OEP)"/>
    <property type="match status" value="1"/>
</dbReference>
<dbReference type="InterPro" id="IPR051906">
    <property type="entry name" value="Bacterial_OMF"/>
</dbReference>
<dbReference type="InterPro" id="IPR028351">
    <property type="entry name" value="CyaE"/>
</dbReference>
<dbReference type="InterPro" id="IPR003423">
    <property type="entry name" value="OMP_efflux"/>
</dbReference>
<dbReference type="PANTHER" id="PTHR30026">
    <property type="entry name" value="OUTER MEMBRANE PROTEIN TOLC"/>
    <property type="match status" value="1"/>
</dbReference>
<dbReference type="PANTHER" id="PTHR30026:SF20">
    <property type="entry name" value="OUTER MEMBRANE PROTEIN TOLC"/>
    <property type="match status" value="1"/>
</dbReference>
<dbReference type="Pfam" id="PF02321">
    <property type="entry name" value="OEP"/>
    <property type="match status" value="2"/>
</dbReference>
<dbReference type="PIRSF" id="PIRSF001892">
    <property type="entry name" value="CyaE"/>
    <property type="match status" value="1"/>
</dbReference>
<dbReference type="SUPFAM" id="SSF56954">
    <property type="entry name" value="Outer membrane efflux proteins (OEP)"/>
    <property type="match status" value="1"/>
</dbReference>
<gene>
    <name type="primary">cyaE</name>
    <name type="ordered locus">BP0763</name>
</gene>